<organism>
    <name type="scientific">Cupriavidus pinatubonensis (strain JMP 134 / LMG 1197)</name>
    <name type="common">Cupriavidus necator (strain JMP 134)</name>
    <dbReference type="NCBI Taxonomy" id="264198"/>
    <lineage>
        <taxon>Bacteria</taxon>
        <taxon>Pseudomonadati</taxon>
        <taxon>Pseudomonadota</taxon>
        <taxon>Betaproteobacteria</taxon>
        <taxon>Burkholderiales</taxon>
        <taxon>Burkholderiaceae</taxon>
        <taxon>Cupriavidus</taxon>
    </lineage>
</organism>
<dbReference type="EC" id="2.7.2.11" evidence="1"/>
<dbReference type="EMBL" id="CP000090">
    <property type="protein sequence ID" value="AAZ62315.1"/>
    <property type="molecule type" value="Genomic_DNA"/>
</dbReference>
<dbReference type="SMR" id="Q46X18"/>
<dbReference type="STRING" id="264198.Reut_A2955"/>
<dbReference type="KEGG" id="reu:Reut_A2955"/>
<dbReference type="eggNOG" id="COG0263">
    <property type="taxonomic scope" value="Bacteria"/>
</dbReference>
<dbReference type="HOGENOM" id="CLU_025400_2_0_4"/>
<dbReference type="OrthoDB" id="9804434at2"/>
<dbReference type="UniPathway" id="UPA00098">
    <property type="reaction ID" value="UER00359"/>
</dbReference>
<dbReference type="GO" id="GO:0005829">
    <property type="term" value="C:cytosol"/>
    <property type="evidence" value="ECO:0007669"/>
    <property type="project" value="TreeGrafter"/>
</dbReference>
<dbReference type="GO" id="GO:0005524">
    <property type="term" value="F:ATP binding"/>
    <property type="evidence" value="ECO:0007669"/>
    <property type="project" value="UniProtKB-KW"/>
</dbReference>
<dbReference type="GO" id="GO:0004349">
    <property type="term" value="F:glutamate 5-kinase activity"/>
    <property type="evidence" value="ECO:0007669"/>
    <property type="project" value="UniProtKB-UniRule"/>
</dbReference>
<dbReference type="GO" id="GO:0003723">
    <property type="term" value="F:RNA binding"/>
    <property type="evidence" value="ECO:0007669"/>
    <property type="project" value="InterPro"/>
</dbReference>
<dbReference type="GO" id="GO:0055129">
    <property type="term" value="P:L-proline biosynthetic process"/>
    <property type="evidence" value="ECO:0007669"/>
    <property type="project" value="UniProtKB-UniRule"/>
</dbReference>
<dbReference type="CDD" id="cd04242">
    <property type="entry name" value="AAK_G5K_ProB"/>
    <property type="match status" value="1"/>
</dbReference>
<dbReference type="CDD" id="cd21157">
    <property type="entry name" value="PUA_G5K"/>
    <property type="match status" value="1"/>
</dbReference>
<dbReference type="FunFam" id="2.30.130.10:FF:000007">
    <property type="entry name" value="Glutamate 5-kinase"/>
    <property type="match status" value="1"/>
</dbReference>
<dbReference type="FunFam" id="3.40.1160.10:FF:000018">
    <property type="entry name" value="Glutamate 5-kinase"/>
    <property type="match status" value="1"/>
</dbReference>
<dbReference type="Gene3D" id="3.40.1160.10">
    <property type="entry name" value="Acetylglutamate kinase-like"/>
    <property type="match status" value="1"/>
</dbReference>
<dbReference type="Gene3D" id="2.30.130.10">
    <property type="entry name" value="PUA domain"/>
    <property type="match status" value="1"/>
</dbReference>
<dbReference type="HAMAP" id="MF_00456">
    <property type="entry name" value="ProB"/>
    <property type="match status" value="1"/>
</dbReference>
<dbReference type="InterPro" id="IPR036393">
    <property type="entry name" value="AceGlu_kinase-like_sf"/>
</dbReference>
<dbReference type="InterPro" id="IPR001048">
    <property type="entry name" value="Asp/Glu/Uridylate_kinase"/>
</dbReference>
<dbReference type="InterPro" id="IPR041739">
    <property type="entry name" value="G5K_ProB"/>
</dbReference>
<dbReference type="InterPro" id="IPR001057">
    <property type="entry name" value="Glu/AcGlu_kinase"/>
</dbReference>
<dbReference type="InterPro" id="IPR011529">
    <property type="entry name" value="Glu_5kinase"/>
</dbReference>
<dbReference type="InterPro" id="IPR005715">
    <property type="entry name" value="Glu_5kinase/COase_Synthase"/>
</dbReference>
<dbReference type="InterPro" id="IPR019797">
    <property type="entry name" value="Glutamate_5-kinase_CS"/>
</dbReference>
<dbReference type="InterPro" id="IPR002478">
    <property type="entry name" value="PUA"/>
</dbReference>
<dbReference type="InterPro" id="IPR015947">
    <property type="entry name" value="PUA-like_sf"/>
</dbReference>
<dbReference type="InterPro" id="IPR036974">
    <property type="entry name" value="PUA_sf"/>
</dbReference>
<dbReference type="NCBIfam" id="TIGR01027">
    <property type="entry name" value="proB"/>
    <property type="match status" value="1"/>
</dbReference>
<dbReference type="PANTHER" id="PTHR43654">
    <property type="entry name" value="GLUTAMATE 5-KINASE"/>
    <property type="match status" value="1"/>
</dbReference>
<dbReference type="PANTHER" id="PTHR43654:SF1">
    <property type="entry name" value="ISOPENTENYL PHOSPHATE KINASE"/>
    <property type="match status" value="1"/>
</dbReference>
<dbReference type="Pfam" id="PF00696">
    <property type="entry name" value="AA_kinase"/>
    <property type="match status" value="1"/>
</dbReference>
<dbReference type="Pfam" id="PF01472">
    <property type="entry name" value="PUA"/>
    <property type="match status" value="1"/>
</dbReference>
<dbReference type="PIRSF" id="PIRSF000729">
    <property type="entry name" value="GK"/>
    <property type="match status" value="1"/>
</dbReference>
<dbReference type="PRINTS" id="PR00474">
    <property type="entry name" value="GLU5KINASE"/>
</dbReference>
<dbReference type="SMART" id="SM00359">
    <property type="entry name" value="PUA"/>
    <property type="match status" value="1"/>
</dbReference>
<dbReference type="SUPFAM" id="SSF53633">
    <property type="entry name" value="Carbamate kinase-like"/>
    <property type="match status" value="1"/>
</dbReference>
<dbReference type="SUPFAM" id="SSF88697">
    <property type="entry name" value="PUA domain-like"/>
    <property type="match status" value="1"/>
</dbReference>
<dbReference type="PROSITE" id="PS00902">
    <property type="entry name" value="GLUTAMATE_5_KINASE"/>
    <property type="match status" value="1"/>
</dbReference>
<dbReference type="PROSITE" id="PS50890">
    <property type="entry name" value="PUA"/>
    <property type="match status" value="1"/>
</dbReference>
<evidence type="ECO:0000255" key="1">
    <source>
        <dbReference type="HAMAP-Rule" id="MF_00456"/>
    </source>
</evidence>
<comment type="function">
    <text evidence="1">Catalyzes the transfer of a phosphate group to glutamate to form L-glutamate 5-phosphate.</text>
</comment>
<comment type="catalytic activity">
    <reaction evidence="1">
        <text>L-glutamate + ATP = L-glutamyl 5-phosphate + ADP</text>
        <dbReference type="Rhea" id="RHEA:14877"/>
        <dbReference type="ChEBI" id="CHEBI:29985"/>
        <dbReference type="ChEBI" id="CHEBI:30616"/>
        <dbReference type="ChEBI" id="CHEBI:58274"/>
        <dbReference type="ChEBI" id="CHEBI:456216"/>
        <dbReference type="EC" id="2.7.2.11"/>
    </reaction>
</comment>
<comment type="pathway">
    <text evidence="1">Amino-acid biosynthesis; L-proline biosynthesis; L-glutamate 5-semialdehyde from L-glutamate: step 1/2.</text>
</comment>
<comment type="subcellular location">
    <subcellularLocation>
        <location evidence="1">Cytoplasm</location>
    </subcellularLocation>
</comment>
<comment type="similarity">
    <text evidence="1">Belongs to the glutamate 5-kinase family.</text>
</comment>
<sequence>MQSVIAQAKRIVVKVGSSLVTNDGKGLDYDAIARWAAQIAKLRSIGKEVVLVSSGAIAEGMQRLGWVRRPREIHELQAAAAVGQMGLAQVYESQFGRYGIRTAQVLLTHADLADRERYLNARSTLLTLLSLGVVPIINENDTVVTDEIKFGDNDTLGALVTNLIEGDALVILTDQRGLYTADPRKDPNAEFVDEALAGTPELEQMAGGAGTSIGRGGMLTKILAAKRAAKSGAHTTIASGREANVLERLAAGEAIGTQLLAPTGRLTARKQWMADHLQLRGRVVIDAGAVEKLTSGGKSLLPIGVVEVQGEFARGEVIACVGADGREVARGITNYSSAEARLIARKPSSEIESVLGHLNEPELIHRDNLVLV</sequence>
<name>PROB_CUPPJ</name>
<reference key="1">
    <citation type="journal article" date="2010" name="PLoS ONE">
        <title>The complete multipartite genome sequence of Cupriavidus necator JMP134, a versatile pollutant degrader.</title>
        <authorList>
            <person name="Lykidis A."/>
            <person name="Perez-Pantoja D."/>
            <person name="Ledger T."/>
            <person name="Mavromatis K."/>
            <person name="Anderson I.J."/>
            <person name="Ivanova N.N."/>
            <person name="Hooper S.D."/>
            <person name="Lapidus A."/>
            <person name="Lucas S."/>
            <person name="Gonzalez B."/>
            <person name="Kyrpides N.C."/>
        </authorList>
    </citation>
    <scope>NUCLEOTIDE SEQUENCE [LARGE SCALE GENOMIC DNA]</scope>
    <source>
        <strain>JMP134 / LMG 1197</strain>
    </source>
</reference>
<protein>
    <recommendedName>
        <fullName evidence="1">Glutamate 5-kinase</fullName>
        <ecNumber evidence="1">2.7.2.11</ecNumber>
    </recommendedName>
    <alternativeName>
        <fullName evidence="1">Gamma-glutamyl kinase</fullName>
        <shortName evidence="1">GK</shortName>
    </alternativeName>
</protein>
<feature type="chain" id="PRO_0000230062" description="Glutamate 5-kinase">
    <location>
        <begin position="1"/>
        <end position="372"/>
    </location>
</feature>
<feature type="domain" description="PUA" evidence="1">
    <location>
        <begin position="280"/>
        <end position="358"/>
    </location>
</feature>
<feature type="binding site" evidence="1">
    <location>
        <position position="14"/>
    </location>
    <ligand>
        <name>ATP</name>
        <dbReference type="ChEBI" id="CHEBI:30616"/>
    </ligand>
</feature>
<feature type="binding site" evidence="1">
    <location>
        <position position="54"/>
    </location>
    <ligand>
        <name>substrate</name>
    </ligand>
</feature>
<feature type="binding site" evidence="1">
    <location>
        <position position="141"/>
    </location>
    <ligand>
        <name>substrate</name>
    </ligand>
</feature>
<feature type="binding site" evidence="1">
    <location>
        <position position="153"/>
    </location>
    <ligand>
        <name>substrate</name>
    </ligand>
</feature>
<feature type="binding site" evidence="1">
    <location>
        <begin position="173"/>
        <end position="174"/>
    </location>
    <ligand>
        <name>ATP</name>
        <dbReference type="ChEBI" id="CHEBI:30616"/>
    </ligand>
</feature>
<proteinExistence type="inferred from homology"/>
<gene>
    <name evidence="1" type="primary">proB</name>
    <name type="ordered locus">Reut_A2955</name>
</gene>
<keyword id="KW-0028">Amino-acid biosynthesis</keyword>
<keyword id="KW-0067">ATP-binding</keyword>
<keyword id="KW-0963">Cytoplasm</keyword>
<keyword id="KW-0418">Kinase</keyword>
<keyword id="KW-0547">Nucleotide-binding</keyword>
<keyword id="KW-0641">Proline biosynthesis</keyword>
<keyword id="KW-0808">Transferase</keyword>
<accession>Q46X18</accession>